<sequence length="373" mass="43124">MSSPDCGYASDDQIQRSCSLPMMMGQYQWTEPRTVFQEGKPKRDEVSANSRSKAEARIRRPMNAFMVWAKDERKRLAQQNPDLHNAELSKMLGKSWKSLNLATKRPFVEEAERLRVQHIQDYPDYKYRPRRKKQVKRMKREEECFFPSANIPGPEAMVNNVMVGQKYKMQYSVQNLQENQLPTAGYFEGHSPMGYFYKDYDVPNYYTSQNSSGYCSPPTQDEYQALSYGFGSSYMPYQQTTTTPVMAKQISVTQNIPQESPEHGMMASPQMYNGQMYLPECAKTHPVAQTEQHSPSHQSQQMVSQNYLQSQQDGHLETDIDKTEFDQYLMYEPKSDPELIYTIDQDSGPYSTNLLPSLISEANNVCYYDYCGV</sequence>
<keyword id="KW-0010">Activator</keyword>
<keyword id="KW-0217">Developmental protein</keyword>
<keyword id="KW-0238">DNA-binding</keyword>
<keyword id="KW-0306">Gastrulation</keyword>
<keyword id="KW-0539">Nucleus</keyword>
<keyword id="KW-1185">Reference proteome</keyword>
<keyword id="KW-0804">Transcription</keyword>
<keyword id="KW-0805">Transcription regulation</keyword>
<keyword id="KW-0879">Wnt signaling pathway</keyword>
<proteinExistence type="evidence at transcript level"/>
<protein>
    <recommendedName>
        <fullName>Transcription factor Sox-17-beta.3</fullName>
    </recommendedName>
    <alternativeName>
        <fullName>SRY (sex determining region Y)-box 17-beta.3</fullName>
    </alternativeName>
</protein>
<reference evidence="6" key="1">
    <citation type="submission" date="2007-05" db="EMBL/GenBank/DDBJ databases">
        <authorList>
            <consortium name="NIH - Xenopus Gene Collection (XGC) project"/>
        </authorList>
    </citation>
    <scope>NUCLEOTIDE SEQUENCE [LARGE SCALE MRNA]</scope>
    <source>
        <tissue evidence="6">Neurula</tissue>
    </source>
</reference>
<dbReference type="EMBL" id="BC141780">
    <property type="protein sequence ID" value="AAI41781.1"/>
    <property type="molecule type" value="mRNA"/>
</dbReference>
<dbReference type="SMR" id="A5D8R3"/>
<dbReference type="GeneID" id="100049782"/>
<dbReference type="KEGG" id="xla:100049782"/>
<dbReference type="AGR" id="Xenbase:XB-GENE-865510"/>
<dbReference type="CTD" id="100049782"/>
<dbReference type="Xenbase" id="XB-GENE-865510">
    <property type="gene designation" value="sox17b.L"/>
</dbReference>
<dbReference type="OMA" id="YCSPPTQ"/>
<dbReference type="OrthoDB" id="9882966at2759"/>
<dbReference type="Proteomes" id="UP000186698">
    <property type="component" value="Chromosome 6L"/>
</dbReference>
<dbReference type="Bgee" id="100049782">
    <property type="expression patterns" value="Expressed in gastrula and 2 other cell types or tissues"/>
</dbReference>
<dbReference type="GO" id="GO:0005634">
    <property type="term" value="C:nucleus"/>
    <property type="evidence" value="ECO:0000318"/>
    <property type="project" value="GO_Central"/>
</dbReference>
<dbReference type="GO" id="GO:0001228">
    <property type="term" value="F:DNA-binding transcription activator activity, RNA polymerase II-specific"/>
    <property type="evidence" value="ECO:0000318"/>
    <property type="project" value="GO_Central"/>
</dbReference>
<dbReference type="GO" id="GO:0000978">
    <property type="term" value="F:RNA polymerase II cis-regulatory region sequence-specific DNA binding"/>
    <property type="evidence" value="ECO:0000318"/>
    <property type="project" value="GO_Central"/>
</dbReference>
<dbReference type="GO" id="GO:0030154">
    <property type="term" value="P:cell differentiation"/>
    <property type="evidence" value="ECO:0000318"/>
    <property type="project" value="GO_Central"/>
</dbReference>
<dbReference type="GO" id="GO:0007369">
    <property type="term" value="P:gastrulation"/>
    <property type="evidence" value="ECO:0007669"/>
    <property type="project" value="UniProtKB-KW"/>
</dbReference>
<dbReference type="GO" id="GO:0045944">
    <property type="term" value="P:positive regulation of transcription by RNA polymerase II"/>
    <property type="evidence" value="ECO:0000318"/>
    <property type="project" value="GO_Central"/>
</dbReference>
<dbReference type="GO" id="GO:0016055">
    <property type="term" value="P:Wnt signaling pathway"/>
    <property type="evidence" value="ECO:0007669"/>
    <property type="project" value="UniProtKB-KW"/>
</dbReference>
<dbReference type="CDD" id="cd22032">
    <property type="entry name" value="HMG-box_SoxF"/>
    <property type="match status" value="1"/>
</dbReference>
<dbReference type="FunFam" id="1.10.30.10:FF:000008">
    <property type="entry name" value="transcription factor SOX-7"/>
    <property type="match status" value="1"/>
</dbReference>
<dbReference type="Gene3D" id="1.10.30.10">
    <property type="entry name" value="High mobility group box domain"/>
    <property type="match status" value="1"/>
</dbReference>
<dbReference type="InterPro" id="IPR009071">
    <property type="entry name" value="HMG_box_dom"/>
</dbReference>
<dbReference type="InterPro" id="IPR036910">
    <property type="entry name" value="HMG_box_dom_sf"/>
</dbReference>
<dbReference type="InterPro" id="IPR021934">
    <property type="entry name" value="Sox_C"/>
</dbReference>
<dbReference type="InterPro" id="IPR050140">
    <property type="entry name" value="SRY-related_HMG-box_TF-like"/>
</dbReference>
<dbReference type="PANTHER" id="PTHR10270">
    <property type="entry name" value="SOX TRANSCRIPTION FACTOR"/>
    <property type="match status" value="1"/>
</dbReference>
<dbReference type="PANTHER" id="PTHR10270:SF326">
    <property type="entry name" value="TRANSCRIPTION FACTOR SOX-17-BETA.3"/>
    <property type="match status" value="1"/>
</dbReference>
<dbReference type="Pfam" id="PF00505">
    <property type="entry name" value="HMG_box"/>
    <property type="match status" value="1"/>
</dbReference>
<dbReference type="SMART" id="SM00398">
    <property type="entry name" value="HMG"/>
    <property type="match status" value="1"/>
</dbReference>
<dbReference type="SUPFAM" id="SSF47095">
    <property type="entry name" value="HMG-box"/>
    <property type="match status" value="1"/>
</dbReference>
<dbReference type="PROSITE" id="PS50118">
    <property type="entry name" value="HMG_BOX_2"/>
    <property type="match status" value="1"/>
</dbReference>
<dbReference type="PROSITE" id="PS51516">
    <property type="entry name" value="SOX_C"/>
    <property type="match status" value="1"/>
</dbReference>
<accession>A5D8R3</accession>
<comment type="function">
    <text evidence="1">Transcription activator. Doesn't appear to bind to the consensus 5'-AACAAT-3' DNA binding site, but binds 5'-ATTGTT-3'. All of the sox17 proteins are required for embryonic endoderm development and gastrulation movements, and show some redundancy in function. In addition, the sox17 proteins have distinct but overlapping roles in later gut development. Acts downstream of vegt-signaling in endoderm differentiation to induce a range of endodermal genes both directly and indirectly. Also represses wnt-responsive genes to inhibit wnt/beta-catenin-mediated signaling (By similarity).</text>
</comment>
<comment type="subunit">
    <text evidence="1">Interacts (via C-terminus) with ctnnb1/beta-catenin (via Armadillo repeats); this interaction is required for inhibition of wnt-signaling.</text>
</comment>
<comment type="subcellular location">
    <subcellularLocation>
        <location evidence="1 3">Nucleus</location>
    </subcellularLocation>
</comment>
<comment type="domain">
    <text evidence="2">The 9aaTAD motif is a transactivation domain present in a large number of yeast and animal transcription factors.</text>
</comment>
<evidence type="ECO:0000250" key="1">
    <source>
        <dbReference type="UniProtKB" id="O42601"/>
    </source>
</evidence>
<evidence type="ECO:0000250" key="2">
    <source>
        <dbReference type="UniProtKB" id="Q9H6I2"/>
    </source>
</evidence>
<evidence type="ECO:0000255" key="3">
    <source>
        <dbReference type="PROSITE-ProRule" id="PRU00267"/>
    </source>
</evidence>
<evidence type="ECO:0000255" key="4">
    <source>
        <dbReference type="PROSITE-ProRule" id="PRU00849"/>
    </source>
</evidence>
<evidence type="ECO:0000256" key="5">
    <source>
        <dbReference type="SAM" id="MobiDB-lite"/>
    </source>
</evidence>
<evidence type="ECO:0000312" key="6">
    <source>
        <dbReference type="EMBL" id="AAI41781.1"/>
    </source>
</evidence>
<organism>
    <name type="scientific">Xenopus laevis</name>
    <name type="common">African clawed frog</name>
    <dbReference type="NCBI Taxonomy" id="8355"/>
    <lineage>
        <taxon>Eukaryota</taxon>
        <taxon>Metazoa</taxon>
        <taxon>Chordata</taxon>
        <taxon>Craniata</taxon>
        <taxon>Vertebrata</taxon>
        <taxon>Euteleostomi</taxon>
        <taxon>Amphibia</taxon>
        <taxon>Batrachia</taxon>
        <taxon>Anura</taxon>
        <taxon>Pipoidea</taxon>
        <taxon>Pipidae</taxon>
        <taxon>Xenopodinae</taxon>
        <taxon>Xenopus</taxon>
        <taxon>Xenopus</taxon>
    </lineage>
</organism>
<feature type="chain" id="PRO_0000397924" description="Transcription factor Sox-17-beta.3">
    <location>
        <begin position="1"/>
        <end position="373"/>
    </location>
</feature>
<feature type="domain" description="Sox C-terminal" evidence="4">
    <location>
        <begin position="256"/>
        <end position="373"/>
    </location>
</feature>
<feature type="DNA-binding region" description="HMG box" evidence="3">
    <location>
        <begin position="58"/>
        <end position="126"/>
    </location>
</feature>
<feature type="region of interest" description="Disordered" evidence="5">
    <location>
        <begin position="33"/>
        <end position="55"/>
    </location>
</feature>
<feature type="region of interest" description="Required for transcriptional activity and interaction with ctnnb1" evidence="1">
    <location>
        <begin position="324"/>
        <end position="328"/>
    </location>
</feature>
<feature type="short sequence motif" description="9aaTAD" evidence="2">
    <location>
        <begin position="323"/>
        <end position="331"/>
    </location>
</feature>
<feature type="compositionally biased region" description="Basic and acidic residues" evidence="5">
    <location>
        <begin position="39"/>
        <end position="55"/>
    </location>
</feature>
<name>S17B3_XENLA</name>
<gene>
    <name type="primary">sox17b.3</name>
</gene>